<feature type="chain" id="PRO_0000206334" description="L-lactate dehydrogenase">
    <location>
        <begin position="1"/>
        <end position="386"/>
    </location>
</feature>
<feature type="domain" description="FMN hydroxy acid dehydrogenase" evidence="1">
    <location>
        <begin position="1"/>
        <end position="380"/>
    </location>
</feature>
<feature type="active site" description="Proton acceptor" evidence="1">
    <location>
        <position position="275"/>
    </location>
</feature>
<feature type="binding site" evidence="1">
    <location>
        <position position="24"/>
    </location>
    <ligand>
        <name>substrate</name>
    </ligand>
</feature>
<feature type="binding site" evidence="1">
    <location>
        <position position="106"/>
    </location>
    <ligand>
        <name>FMN</name>
        <dbReference type="ChEBI" id="CHEBI:58210"/>
    </ligand>
</feature>
<feature type="binding site" evidence="1">
    <location>
        <position position="127"/>
    </location>
    <ligand>
        <name>FMN</name>
        <dbReference type="ChEBI" id="CHEBI:58210"/>
    </ligand>
</feature>
<feature type="binding site" evidence="1">
    <location>
        <position position="129"/>
    </location>
    <ligand>
        <name>substrate</name>
    </ligand>
</feature>
<feature type="binding site" evidence="1">
    <location>
        <position position="155"/>
    </location>
    <ligand>
        <name>FMN</name>
        <dbReference type="ChEBI" id="CHEBI:58210"/>
    </ligand>
</feature>
<feature type="binding site" evidence="1">
    <location>
        <position position="164"/>
    </location>
    <ligand>
        <name>substrate</name>
    </ligand>
</feature>
<feature type="binding site" evidence="1">
    <location>
        <position position="251"/>
    </location>
    <ligand>
        <name>FMN</name>
        <dbReference type="ChEBI" id="CHEBI:58210"/>
    </ligand>
</feature>
<feature type="binding site" evidence="1">
    <location>
        <position position="278"/>
    </location>
    <ligand>
        <name>substrate</name>
    </ligand>
</feature>
<feature type="binding site" evidence="1">
    <location>
        <begin position="306"/>
        <end position="330"/>
    </location>
    <ligand>
        <name>FMN</name>
        <dbReference type="ChEBI" id="CHEBI:58210"/>
    </ligand>
</feature>
<accession>Q6DAY3</accession>
<sequence length="386" mass="41720">MIISASTDYRAAAQRRLPPFLFHYIDGGAYGEHTLRRNTADLADIALRQRILKNMSDLSLETQLFGEKLAMPVVLAPVGLTGMYARRGEVQAARAAAQKGIPFTLSTVSVCPIEEVAPAIDRPMWFQLYVLKDRGFMRSALERAQAAGVKTLVFTVDMPTPGARYRDAHSGMSGPNAAARRMLQAVTHPQWAWDVGLNGKPHDLGNVSAYRGKPTTLEDYIGWLAANFDPSISWQDLAWIREFWKGPMIIKGILDPEDAKEAVRFGADGIVVSNHGGRQLDGVLSTAHALPAIADAVKGDITILADSGIRSGLDVVRMIALGADGVMLGRAFVYALAAAGEAGVVNLLNLIEKEMRVAMTLTGAKSIADITSDSLVQVTQRRLDGL</sequence>
<dbReference type="EC" id="1.1.-.-" evidence="1"/>
<dbReference type="EMBL" id="BX950851">
    <property type="protein sequence ID" value="CAG73039.1"/>
    <property type="molecule type" value="Genomic_DNA"/>
</dbReference>
<dbReference type="RefSeq" id="WP_011091762.1">
    <property type="nucleotide sequence ID" value="NC_004547.2"/>
</dbReference>
<dbReference type="SMR" id="Q6DAY3"/>
<dbReference type="STRING" id="218491.ECA0119"/>
<dbReference type="KEGG" id="eca:ECA0119"/>
<dbReference type="PATRIC" id="fig|218491.5.peg.122"/>
<dbReference type="eggNOG" id="COG1304">
    <property type="taxonomic scope" value="Bacteria"/>
</dbReference>
<dbReference type="HOGENOM" id="CLU_020639_0_0_6"/>
<dbReference type="OrthoDB" id="9770452at2"/>
<dbReference type="Proteomes" id="UP000007966">
    <property type="component" value="Chromosome"/>
</dbReference>
<dbReference type="GO" id="GO:0005886">
    <property type="term" value="C:plasma membrane"/>
    <property type="evidence" value="ECO:0007669"/>
    <property type="project" value="UniProtKB-SubCell"/>
</dbReference>
<dbReference type="GO" id="GO:0010181">
    <property type="term" value="F:FMN binding"/>
    <property type="evidence" value="ECO:0007669"/>
    <property type="project" value="InterPro"/>
</dbReference>
<dbReference type="GO" id="GO:0004459">
    <property type="term" value="F:L-lactate dehydrogenase activity"/>
    <property type="evidence" value="ECO:0007669"/>
    <property type="project" value="UniProtKB-UniRule"/>
</dbReference>
<dbReference type="GO" id="GO:0009060">
    <property type="term" value="P:aerobic respiration"/>
    <property type="evidence" value="ECO:0007669"/>
    <property type="project" value="TreeGrafter"/>
</dbReference>
<dbReference type="GO" id="GO:0006089">
    <property type="term" value="P:lactate metabolic process"/>
    <property type="evidence" value="ECO:0007669"/>
    <property type="project" value="UniProtKB-UniRule"/>
</dbReference>
<dbReference type="CDD" id="cd02809">
    <property type="entry name" value="alpha_hydroxyacid_oxid_FMN"/>
    <property type="match status" value="1"/>
</dbReference>
<dbReference type="FunFam" id="3.20.20.70:FF:000029">
    <property type="entry name" value="L-lactate dehydrogenase"/>
    <property type="match status" value="1"/>
</dbReference>
<dbReference type="Gene3D" id="3.20.20.70">
    <property type="entry name" value="Aldolase class I"/>
    <property type="match status" value="1"/>
</dbReference>
<dbReference type="HAMAP" id="MF_01559">
    <property type="entry name" value="L_lact_dehydr"/>
    <property type="match status" value="1"/>
</dbReference>
<dbReference type="InterPro" id="IPR013785">
    <property type="entry name" value="Aldolase_TIM"/>
</dbReference>
<dbReference type="InterPro" id="IPR012133">
    <property type="entry name" value="Alpha-hydoxy_acid_DH_FMN"/>
</dbReference>
<dbReference type="InterPro" id="IPR000262">
    <property type="entry name" value="FMN-dep_DH"/>
</dbReference>
<dbReference type="InterPro" id="IPR037396">
    <property type="entry name" value="FMN_HAD"/>
</dbReference>
<dbReference type="InterPro" id="IPR008259">
    <property type="entry name" value="FMN_hydac_DH_AS"/>
</dbReference>
<dbReference type="InterPro" id="IPR020920">
    <property type="entry name" value="LldD"/>
</dbReference>
<dbReference type="NCBIfam" id="NF033901">
    <property type="entry name" value="L_lactate_LldD"/>
    <property type="match status" value="1"/>
</dbReference>
<dbReference type="NCBIfam" id="NF008398">
    <property type="entry name" value="PRK11197.1"/>
    <property type="match status" value="1"/>
</dbReference>
<dbReference type="PANTHER" id="PTHR10578:SF85">
    <property type="entry name" value="L-LACTATE DEHYDROGENASE"/>
    <property type="match status" value="1"/>
</dbReference>
<dbReference type="PANTHER" id="PTHR10578">
    <property type="entry name" value="S -2-HYDROXY-ACID OXIDASE-RELATED"/>
    <property type="match status" value="1"/>
</dbReference>
<dbReference type="Pfam" id="PF01070">
    <property type="entry name" value="FMN_dh"/>
    <property type="match status" value="1"/>
</dbReference>
<dbReference type="PIRSF" id="PIRSF000138">
    <property type="entry name" value="Al-hdrx_acd_dh"/>
    <property type="match status" value="1"/>
</dbReference>
<dbReference type="SUPFAM" id="SSF51395">
    <property type="entry name" value="FMN-linked oxidoreductases"/>
    <property type="match status" value="1"/>
</dbReference>
<dbReference type="PROSITE" id="PS00557">
    <property type="entry name" value="FMN_HYDROXY_ACID_DH_1"/>
    <property type="match status" value="1"/>
</dbReference>
<dbReference type="PROSITE" id="PS51349">
    <property type="entry name" value="FMN_HYDROXY_ACID_DH_2"/>
    <property type="match status" value="1"/>
</dbReference>
<keyword id="KW-0997">Cell inner membrane</keyword>
<keyword id="KW-1003">Cell membrane</keyword>
<keyword id="KW-0285">Flavoprotein</keyword>
<keyword id="KW-0288">FMN</keyword>
<keyword id="KW-0472">Membrane</keyword>
<keyword id="KW-0560">Oxidoreductase</keyword>
<keyword id="KW-1185">Reference proteome</keyword>
<comment type="function">
    <text evidence="1">Catalyzes the conversion of L-lactate to pyruvate. Is coupled to the respiratory chain.</text>
</comment>
<comment type="catalytic activity">
    <reaction evidence="1">
        <text>(S)-lactate + A = pyruvate + AH2</text>
        <dbReference type="Rhea" id="RHEA:45816"/>
        <dbReference type="ChEBI" id="CHEBI:13193"/>
        <dbReference type="ChEBI" id="CHEBI:15361"/>
        <dbReference type="ChEBI" id="CHEBI:16651"/>
        <dbReference type="ChEBI" id="CHEBI:17499"/>
    </reaction>
</comment>
<comment type="cofactor">
    <cofactor evidence="1">
        <name>FMN</name>
        <dbReference type="ChEBI" id="CHEBI:58210"/>
    </cofactor>
</comment>
<comment type="subcellular location">
    <subcellularLocation>
        <location evidence="1">Cell inner membrane</location>
        <topology evidence="1">Peripheral membrane protein</topology>
    </subcellularLocation>
</comment>
<comment type="similarity">
    <text evidence="1">Belongs to the FMN-dependent alpha-hydroxy acid dehydrogenase family.</text>
</comment>
<organism>
    <name type="scientific">Pectobacterium atrosepticum (strain SCRI 1043 / ATCC BAA-672)</name>
    <name type="common">Erwinia carotovora subsp. atroseptica</name>
    <dbReference type="NCBI Taxonomy" id="218491"/>
    <lineage>
        <taxon>Bacteria</taxon>
        <taxon>Pseudomonadati</taxon>
        <taxon>Pseudomonadota</taxon>
        <taxon>Gammaproteobacteria</taxon>
        <taxon>Enterobacterales</taxon>
        <taxon>Pectobacteriaceae</taxon>
        <taxon>Pectobacterium</taxon>
    </lineage>
</organism>
<name>LLDD_PECAS</name>
<evidence type="ECO:0000255" key="1">
    <source>
        <dbReference type="HAMAP-Rule" id="MF_01559"/>
    </source>
</evidence>
<protein>
    <recommendedName>
        <fullName evidence="1">L-lactate dehydrogenase</fullName>
        <ecNumber evidence="1">1.1.-.-</ecNumber>
    </recommendedName>
</protein>
<gene>
    <name evidence="1" type="primary">lldD</name>
    <name type="ordered locus">ECA0119</name>
</gene>
<proteinExistence type="inferred from homology"/>
<reference key="1">
    <citation type="journal article" date="2004" name="Proc. Natl. Acad. Sci. U.S.A.">
        <title>Genome sequence of the enterobacterial phytopathogen Erwinia carotovora subsp. atroseptica and characterization of virulence factors.</title>
        <authorList>
            <person name="Bell K.S."/>
            <person name="Sebaihia M."/>
            <person name="Pritchard L."/>
            <person name="Holden M.T.G."/>
            <person name="Hyman L.J."/>
            <person name="Holeva M.C."/>
            <person name="Thomson N.R."/>
            <person name="Bentley S.D."/>
            <person name="Churcher L.J.C."/>
            <person name="Mungall K."/>
            <person name="Atkin R."/>
            <person name="Bason N."/>
            <person name="Brooks K."/>
            <person name="Chillingworth T."/>
            <person name="Clark K."/>
            <person name="Doggett J."/>
            <person name="Fraser A."/>
            <person name="Hance Z."/>
            <person name="Hauser H."/>
            <person name="Jagels K."/>
            <person name="Moule S."/>
            <person name="Norbertczak H."/>
            <person name="Ormond D."/>
            <person name="Price C."/>
            <person name="Quail M.A."/>
            <person name="Sanders M."/>
            <person name="Walker D."/>
            <person name="Whitehead S."/>
            <person name="Salmond G.P.C."/>
            <person name="Birch P.R.J."/>
            <person name="Parkhill J."/>
            <person name="Toth I.K."/>
        </authorList>
    </citation>
    <scope>NUCLEOTIDE SEQUENCE [LARGE SCALE GENOMIC DNA]</scope>
    <source>
        <strain>SCRI 1043 / ATCC BAA-672</strain>
    </source>
</reference>